<name>RL7_CLOBB</name>
<evidence type="ECO:0000255" key="1">
    <source>
        <dbReference type="HAMAP-Rule" id="MF_00368"/>
    </source>
</evidence>
<evidence type="ECO:0000305" key="2"/>
<accession>B2TIG7</accession>
<protein>
    <recommendedName>
        <fullName evidence="1">Large ribosomal subunit protein bL12</fullName>
    </recommendedName>
    <alternativeName>
        <fullName evidence="2">50S ribosomal protein L7/L12</fullName>
    </alternativeName>
</protein>
<reference key="1">
    <citation type="submission" date="2008-04" db="EMBL/GenBank/DDBJ databases">
        <title>Complete sequence of Clostridium botulinum strain Eklund.</title>
        <authorList>
            <person name="Brinkac L.M."/>
            <person name="Brown J.L."/>
            <person name="Bruce D."/>
            <person name="Detter C."/>
            <person name="Munk C."/>
            <person name="Smith L.A."/>
            <person name="Smith T.J."/>
            <person name="Sutton G."/>
            <person name="Brettin T.S."/>
        </authorList>
    </citation>
    <scope>NUCLEOTIDE SEQUENCE [LARGE SCALE GENOMIC DNA]</scope>
    <source>
        <strain>Eklund 17B / Type B</strain>
    </source>
</reference>
<proteinExistence type="inferred from homology"/>
<dbReference type="EMBL" id="CP001056">
    <property type="protein sequence ID" value="ACD24210.1"/>
    <property type="molecule type" value="Genomic_DNA"/>
</dbReference>
<dbReference type="SMR" id="B2TIG7"/>
<dbReference type="KEGG" id="cbk:CLL_A0230"/>
<dbReference type="PATRIC" id="fig|935198.13.peg.204"/>
<dbReference type="HOGENOM" id="CLU_086499_3_2_9"/>
<dbReference type="Proteomes" id="UP000001195">
    <property type="component" value="Chromosome"/>
</dbReference>
<dbReference type="GO" id="GO:0022625">
    <property type="term" value="C:cytosolic large ribosomal subunit"/>
    <property type="evidence" value="ECO:0007669"/>
    <property type="project" value="TreeGrafter"/>
</dbReference>
<dbReference type="GO" id="GO:0003729">
    <property type="term" value="F:mRNA binding"/>
    <property type="evidence" value="ECO:0007669"/>
    <property type="project" value="TreeGrafter"/>
</dbReference>
<dbReference type="GO" id="GO:0003735">
    <property type="term" value="F:structural constituent of ribosome"/>
    <property type="evidence" value="ECO:0007669"/>
    <property type="project" value="InterPro"/>
</dbReference>
<dbReference type="GO" id="GO:0006412">
    <property type="term" value="P:translation"/>
    <property type="evidence" value="ECO:0007669"/>
    <property type="project" value="UniProtKB-UniRule"/>
</dbReference>
<dbReference type="CDD" id="cd00387">
    <property type="entry name" value="Ribosomal_L7_L12"/>
    <property type="match status" value="1"/>
</dbReference>
<dbReference type="FunFam" id="1.20.5.710:FF:000002">
    <property type="entry name" value="50S ribosomal protein L7/L12"/>
    <property type="match status" value="1"/>
</dbReference>
<dbReference type="FunFam" id="3.30.1390.10:FF:000001">
    <property type="entry name" value="50S ribosomal protein L7/L12"/>
    <property type="match status" value="1"/>
</dbReference>
<dbReference type="Gene3D" id="3.30.1390.10">
    <property type="match status" value="1"/>
</dbReference>
<dbReference type="Gene3D" id="1.20.5.710">
    <property type="entry name" value="Single helix bin"/>
    <property type="match status" value="1"/>
</dbReference>
<dbReference type="HAMAP" id="MF_00368">
    <property type="entry name" value="Ribosomal_bL12"/>
    <property type="match status" value="1"/>
</dbReference>
<dbReference type="InterPro" id="IPR000206">
    <property type="entry name" value="Ribosomal_bL12"/>
</dbReference>
<dbReference type="InterPro" id="IPR013823">
    <property type="entry name" value="Ribosomal_bL12_C"/>
</dbReference>
<dbReference type="InterPro" id="IPR014719">
    <property type="entry name" value="Ribosomal_bL12_C/ClpS-like"/>
</dbReference>
<dbReference type="InterPro" id="IPR008932">
    <property type="entry name" value="Ribosomal_bL12_oligo"/>
</dbReference>
<dbReference type="InterPro" id="IPR036235">
    <property type="entry name" value="Ribosomal_bL12_oligo_N_sf"/>
</dbReference>
<dbReference type="NCBIfam" id="TIGR00855">
    <property type="entry name" value="L12"/>
    <property type="match status" value="1"/>
</dbReference>
<dbReference type="PANTHER" id="PTHR45987">
    <property type="entry name" value="39S RIBOSOMAL PROTEIN L12"/>
    <property type="match status" value="1"/>
</dbReference>
<dbReference type="PANTHER" id="PTHR45987:SF4">
    <property type="entry name" value="LARGE RIBOSOMAL SUBUNIT PROTEIN BL12M"/>
    <property type="match status" value="1"/>
</dbReference>
<dbReference type="Pfam" id="PF00542">
    <property type="entry name" value="Ribosomal_L12"/>
    <property type="match status" value="1"/>
</dbReference>
<dbReference type="Pfam" id="PF16320">
    <property type="entry name" value="Ribosomal_L12_N"/>
    <property type="match status" value="1"/>
</dbReference>
<dbReference type="SUPFAM" id="SSF54736">
    <property type="entry name" value="ClpS-like"/>
    <property type="match status" value="1"/>
</dbReference>
<dbReference type="SUPFAM" id="SSF48300">
    <property type="entry name" value="Ribosomal protein L7/12, oligomerisation (N-terminal) domain"/>
    <property type="match status" value="1"/>
</dbReference>
<feature type="chain" id="PRO_1000121415" description="Large ribosomal subunit protein bL12">
    <location>
        <begin position="1"/>
        <end position="120"/>
    </location>
</feature>
<keyword id="KW-0687">Ribonucleoprotein</keyword>
<keyword id="KW-0689">Ribosomal protein</keyword>
<organism>
    <name type="scientific">Clostridium botulinum (strain Eklund 17B / Type B)</name>
    <dbReference type="NCBI Taxonomy" id="935198"/>
    <lineage>
        <taxon>Bacteria</taxon>
        <taxon>Bacillati</taxon>
        <taxon>Bacillota</taxon>
        <taxon>Clostridia</taxon>
        <taxon>Eubacteriales</taxon>
        <taxon>Clostridiaceae</taxon>
        <taxon>Clostridium</taxon>
    </lineage>
</organism>
<gene>
    <name evidence="1" type="primary">rplL</name>
    <name type="ordered locus">CLL_A0230</name>
</gene>
<sequence>MTREDIIQAIKEMSVLELNELVKACEEEFGVSAAAPVAVAGAVAGGAAEEKTEFDVILASAGANKIKVIKAVREITGLGLKEAKEIVDGAPKTLKEAVSKEEAEDMKAKLAEVGAEVEVK</sequence>
<comment type="function">
    <text evidence="1">Forms part of the ribosomal stalk which helps the ribosome interact with GTP-bound translation factors. Is thus essential for accurate translation.</text>
</comment>
<comment type="subunit">
    <text evidence="1">Homodimer. Part of the ribosomal stalk of the 50S ribosomal subunit. Forms a multimeric L10(L12)X complex, where L10 forms an elongated spine to which 2 to 4 L12 dimers bind in a sequential fashion. Binds GTP-bound translation factors.</text>
</comment>
<comment type="similarity">
    <text evidence="1">Belongs to the bacterial ribosomal protein bL12 family.</text>
</comment>